<protein>
    <recommendedName>
        <fullName evidence="4">Cyclohex-1-ene-1-carbonyl-CoA dehydrogenase</fullName>
        <shortName evidence="3">Ch1CoA dehydrogenase</shortName>
        <ecNumber evidence="2">1.3.8.10</ecNumber>
    </recommendedName>
</protein>
<sequence>MKGPIKFNALSLQGRSVMSNQSNDTTITQRRDTMNELTEEQKLLMEMVRNLAVREIAPRAIEIDENHSFPVHARDLFADLGLLSPLVPVEYGGTGMDITTFAMVLEEIGKVCASTALMLLAQADGMLSIILDGSPALKEKYLPRFGEKSTLMTAFAATEPGAGSDLLAMKTRAVKKGDKYVINGQKCFITNGSVADILTVWAYTDPSKGAKGMSTFVVERGTPGLIYGHNEKKMGMRGCPNSELFFEDLEVPAENLVGEEGKGFAYLMGALSINRVFCASQAVGIAQGALERAMQHTREREQFGKPIAHLTPIQFMIADMATEVEAARLLVRKATTLLDAKDKRGPLIGGMAKTFASDTAMKVTTDAVQVMGGSGYMQEYQVERMMREAKLTQIYTGTNQITRMVTGRSLLFPS</sequence>
<organism>
    <name type="scientific">Syntrophus aciditrophicus (strain SB)</name>
    <dbReference type="NCBI Taxonomy" id="56780"/>
    <lineage>
        <taxon>Bacteria</taxon>
        <taxon>Pseudomonadati</taxon>
        <taxon>Thermodesulfobacteriota</taxon>
        <taxon>Syntrophia</taxon>
        <taxon>Syntrophales</taxon>
        <taxon>Syntrophaceae</taxon>
        <taxon>Syntrophus</taxon>
    </lineage>
</organism>
<accession>Q2LQN9</accession>
<proteinExistence type="evidence at protein level"/>
<feature type="chain" id="PRO_0000430699" description="Cyclohex-1-ene-1-carbonyl-CoA dehydrogenase">
    <location>
        <begin position="1"/>
        <end position="414"/>
    </location>
</feature>
<feature type="active site" description="Proton acceptor" evidence="1">
    <location>
        <position position="124"/>
    </location>
</feature>
<feature type="binding site" evidence="1">
    <location>
        <position position="157"/>
    </location>
    <ligand>
        <name>FAD</name>
        <dbReference type="ChEBI" id="CHEBI:57692"/>
    </ligand>
</feature>
<feature type="binding site" evidence="1">
    <location>
        <position position="158"/>
    </location>
    <ligand>
        <name>FAD</name>
        <dbReference type="ChEBI" id="CHEBI:57692"/>
    </ligand>
</feature>
<feature type="binding site" evidence="1">
    <location>
        <position position="164"/>
    </location>
    <ligand>
        <name>cyclohex-1-ene-1-carbonyl-CoA</name>
        <dbReference type="ChEBI" id="CHEBI:76270"/>
    </ligand>
</feature>
<feature type="binding site" evidence="1">
    <location>
        <position position="164"/>
    </location>
    <ligand>
        <name>cyclohexa-1,5-diene-1-carbonyl-CoA</name>
        <dbReference type="ChEBI" id="CHEBI:57374"/>
    </ligand>
</feature>
<feature type="binding site" evidence="1">
    <location>
        <position position="164"/>
    </location>
    <ligand>
        <name>FAD</name>
        <dbReference type="ChEBI" id="CHEBI:57692"/>
    </ligand>
</feature>
<feature type="binding site" evidence="1">
    <location>
        <position position="190"/>
    </location>
    <ligand>
        <name>FAD</name>
        <dbReference type="ChEBI" id="CHEBI:57692"/>
    </ligand>
</feature>
<feature type="binding site" evidence="1">
    <location>
        <position position="211"/>
    </location>
    <ligand>
        <name>cyclohex-1-ene-1-carbonyl-CoA</name>
        <dbReference type="ChEBI" id="CHEBI:76270"/>
    </ligand>
</feature>
<feature type="binding site" evidence="1">
    <location>
        <position position="211"/>
    </location>
    <ligand>
        <name>cyclohexa-1,5-diene-1-carbonyl-CoA</name>
        <dbReference type="ChEBI" id="CHEBI:57374"/>
    </ligand>
</feature>
<feature type="binding site" evidence="1">
    <location>
        <position position="275"/>
    </location>
    <ligand>
        <name>cyclohex-1-ene-1-carbonyl-CoA</name>
        <dbReference type="ChEBI" id="CHEBI:76270"/>
    </ligand>
</feature>
<feature type="binding site" evidence="1">
    <location>
        <position position="275"/>
    </location>
    <ligand>
        <name>cyclohexa-1,5-diene-1-carbonyl-CoA</name>
        <dbReference type="ChEBI" id="CHEBI:57374"/>
    </ligand>
</feature>
<feature type="binding site" evidence="1">
    <location>
        <position position="396"/>
    </location>
    <ligand>
        <name>cyclohex-1-ene-1-carbonyl-CoA</name>
        <dbReference type="ChEBI" id="CHEBI:76270"/>
    </ligand>
</feature>
<feature type="binding site" evidence="1">
    <location>
        <position position="396"/>
    </location>
    <ligand>
        <name>cyclohexa-1,5-diene-1-carbonyl-CoA</name>
        <dbReference type="ChEBI" id="CHEBI:57374"/>
    </ligand>
</feature>
<feature type="binding site" evidence="1">
    <location>
        <position position="398"/>
    </location>
    <ligand>
        <name>FAD</name>
        <dbReference type="ChEBI" id="CHEBI:57692"/>
    </ligand>
</feature>
<feature type="binding site" evidence="1">
    <location>
        <position position="400"/>
    </location>
    <ligand>
        <name>FAD</name>
        <dbReference type="ChEBI" id="CHEBI:57692"/>
    </ligand>
</feature>
<feature type="binding site" evidence="1">
    <location>
        <position position="408"/>
    </location>
    <ligand>
        <name>cyclohex-1-ene-1-carbonyl-CoA</name>
        <dbReference type="ChEBI" id="CHEBI:76270"/>
    </ligand>
</feature>
<feature type="binding site" evidence="1">
    <location>
        <position position="408"/>
    </location>
    <ligand>
        <name>cyclohexa-1,5-diene-1-carbonyl-CoA</name>
        <dbReference type="ChEBI" id="CHEBI:57374"/>
    </ligand>
</feature>
<keyword id="KW-0274">FAD</keyword>
<keyword id="KW-0285">Flavoprotein</keyword>
<keyword id="KW-0560">Oxidoreductase</keyword>
<keyword id="KW-1185">Reference proteome</keyword>
<gene>
    <name evidence="4" type="ordered locus">SYNAS_02220</name>
    <name evidence="5" type="ORF">SYN_02587</name>
</gene>
<name>CH1CO_SYNAS</name>
<comment type="function">
    <text evidence="2">Mediates the conversion of cyclohex-1-ene-1-carbonyl-CoA (Ch1CoA) into (E)-2-cyclohex-1,5-diene-1-carbonyl-CoA in biosynthesis of cyclohexane-1-carboxylate, a by-product produced during fermentation of benzoate and crotonate to acetate. Also able to further convert (E)-2-cyclohex-1,5-diene-1-carbonyl-CoA to benzoyl-CoA.</text>
</comment>
<comment type="catalytic activity">
    <reaction evidence="2">
        <text>cyclohex-1-ene-1-carbonyl-CoA + oxidized [electron-transfer flavoprotein] + H(+) = cyclohexa-1,5-diene-1-carbonyl-CoA + reduced [electron-transfer flavoprotein]</text>
        <dbReference type="Rhea" id="RHEA:12993"/>
        <dbReference type="Rhea" id="RHEA-COMP:10685"/>
        <dbReference type="Rhea" id="RHEA-COMP:10686"/>
        <dbReference type="ChEBI" id="CHEBI:15378"/>
        <dbReference type="ChEBI" id="CHEBI:57374"/>
        <dbReference type="ChEBI" id="CHEBI:57692"/>
        <dbReference type="ChEBI" id="CHEBI:58307"/>
        <dbReference type="ChEBI" id="CHEBI:76270"/>
        <dbReference type="EC" id="1.3.8.10"/>
    </reaction>
</comment>
<comment type="cofactor">
    <cofactor evidence="2">
        <name>FAD</name>
        <dbReference type="ChEBI" id="CHEBI:57692"/>
    </cofactor>
</comment>
<comment type="biophysicochemical properties">
    <kinetics>
        <KM evidence="2">19 uM for (E)-2-cyclohex-1,5-diene-1-carbonyl-CoA</KM>
    </kinetics>
</comment>
<comment type="subunit">
    <text evidence="2">Homotetramer.</text>
</comment>
<comment type="similarity">
    <text evidence="4">Belongs to the acyl-CoA dehydrogenase family.</text>
</comment>
<dbReference type="EC" id="1.3.8.10" evidence="2"/>
<dbReference type="EMBL" id="CP000252">
    <property type="protein sequence ID" value="ABC76101.1"/>
    <property type="molecule type" value="Genomic_DNA"/>
</dbReference>
<dbReference type="RefSeq" id="WP_011416135.1">
    <property type="nucleotide sequence ID" value="NC_007759.1"/>
</dbReference>
<dbReference type="SMR" id="Q2LQN9"/>
<dbReference type="FunCoup" id="Q2LQN9">
    <property type="interactions" value="352"/>
</dbReference>
<dbReference type="STRING" id="56780.SYN_02587"/>
<dbReference type="KEGG" id="sat:SYN_02587"/>
<dbReference type="eggNOG" id="COG1960">
    <property type="taxonomic scope" value="Bacteria"/>
</dbReference>
<dbReference type="HOGENOM" id="CLU_018204_0_2_7"/>
<dbReference type="InParanoid" id="Q2LQN9"/>
<dbReference type="BioCyc" id="MetaCyc:MONOMER-18319"/>
<dbReference type="SABIO-RK" id="Q2LQN9"/>
<dbReference type="Proteomes" id="UP000001933">
    <property type="component" value="Chromosome"/>
</dbReference>
<dbReference type="GO" id="GO:0003995">
    <property type="term" value="F:acyl-CoA dehydrogenase activity"/>
    <property type="evidence" value="ECO:0007669"/>
    <property type="project" value="InterPro"/>
</dbReference>
<dbReference type="GO" id="GO:0050660">
    <property type="term" value="F:flavin adenine dinucleotide binding"/>
    <property type="evidence" value="ECO:0000314"/>
    <property type="project" value="UniProtKB"/>
</dbReference>
<dbReference type="GO" id="GO:0052890">
    <property type="term" value="F:oxidoreductase activity, acting on the CH-CH group of donors, with a flavin as acceptor"/>
    <property type="evidence" value="ECO:0000314"/>
    <property type="project" value="UniProtKB"/>
</dbReference>
<dbReference type="GO" id="GO:0051262">
    <property type="term" value="P:protein tetramerization"/>
    <property type="evidence" value="ECO:0000314"/>
    <property type="project" value="UniProtKB"/>
</dbReference>
<dbReference type="FunFam" id="1.20.140.10:FF:000004">
    <property type="entry name" value="Acyl-CoA dehydrogenase FadE25"/>
    <property type="match status" value="1"/>
</dbReference>
<dbReference type="FunFam" id="2.40.110.10:FF:000001">
    <property type="entry name" value="Acyl-CoA dehydrogenase, mitochondrial"/>
    <property type="match status" value="1"/>
</dbReference>
<dbReference type="Gene3D" id="1.10.540.10">
    <property type="entry name" value="Acyl-CoA dehydrogenase/oxidase, N-terminal domain"/>
    <property type="match status" value="1"/>
</dbReference>
<dbReference type="Gene3D" id="2.40.110.10">
    <property type="entry name" value="Butyryl-CoA Dehydrogenase, subunit A, domain 2"/>
    <property type="match status" value="1"/>
</dbReference>
<dbReference type="Gene3D" id="1.20.140.10">
    <property type="entry name" value="Butyryl-CoA Dehydrogenase, subunit A, domain 3"/>
    <property type="match status" value="1"/>
</dbReference>
<dbReference type="InterPro" id="IPR006089">
    <property type="entry name" value="Acyl-CoA_DH_CS"/>
</dbReference>
<dbReference type="InterPro" id="IPR006091">
    <property type="entry name" value="Acyl-CoA_Oxase/DH_mid-dom"/>
</dbReference>
<dbReference type="InterPro" id="IPR046373">
    <property type="entry name" value="Acyl-CoA_Oxase/DH_mid-dom_sf"/>
</dbReference>
<dbReference type="InterPro" id="IPR036250">
    <property type="entry name" value="AcylCo_DH-like_C"/>
</dbReference>
<dbReference type="InterPro" id="IPR009075">
    <property type="entry name" value="AcylCo_DH/oxidase_C"/>
</dbReference>
<dbReference type="InterPro" id="IPR013786">
    <property type="entry name" value="AcylCoA_DH/ox_N"/>
</dbReference>
<dbReference type="InterPro" id="IPR037069">
    <property type="entry name" value="AcylCoA_DH/ox_N_sf"/>
</dbReference>
<dbReference type="InterPro" id="IPR009100">
    <property type="entry name" value="AcylCoA_DH/oxidase_NM_dom_sf"/>
</dbReference>
<dbReference type="PANTHER" id="PTHR43884">
    <property type="entry name" value="ACYL-COA DEHYDROGENASE"/>
    <property type="match status" value="1"/>
</dbReference>
<dbReference type="PANTHER" id="PTHR43884:SF12">
    <property type="entry name" value="ISOVALERYL-COA DEHYDROGENASE, MITOCHONDRIAL-RELATED"/>
    <property type="match status" value="1"/>
</dbReference>
<dbReference type="Pfam" id="PF00441">
    <property type="entry name" value="Acyl-CoA_dh_1"/>
    <property type="match status" value="1"/>
</dbReference>
<dbReference type="Pfam" id="PF02770">
    <property type="entry name" value="Acyl-CoA_dh_M"/>
    <property type="match status" value="1"/>
</dbReference>
<dbReference type="Pfam" id="PF02771">
    <property type="entry name" value="Acyl-CoA_dh_N"/>
    <property type="match status" value="1"/>
</dbReference>
<dbReference type="PIRSF" id="PIRSF016578">
    <property type="entry name" value="HsaA"/>
    <property type="match status" value="1"/>
</dbReference>
<dbReference type="SUPFAM" id="SSF47203">
    <property type="entry name" value="Acyl-CoA dehydrogenase C-terminal domain-like"/>
    <property type="match status" value="1"/>
</dbReference>
<dbReference type="SUPFAM" id="SSF56645">
    <property type="entry name" value="Acyl-CoA dehydrogenase NM domain-like"/>
    <property type="match status" value="1"/>
</dbReference>
<dbReference type="PROSITE" id="PS00073">
    <property type="entry name" value="ACYL_COA_DH_2"/>
    <property type="match status" value="1"/>
</dbReference>
<reference key="1">
    <citation type="journal article" date="2007" name="Proc. Natl. Acad. Sci. U.S.A.">
        <title>The genome of Syntrophus aciditrophicus: life at the thermodynamic limit of microbial growth.</title>
        <authorList>
            <person name="McInerney M.J."/>
            <person name="Rohlin L."/>
            <person name="Mouttaki H."/>
            <person name="Kim U."/>
            <person name="Krupp R.S."/>
            <person name="Rios-Hernandez L."/>
            <person name="Sieber J."/>
            <person name="Struchtemeyer C.G."/>
            <person name="Bhattacharyya A."/>
            <person name="Campbell J.W."/>
            <person name="Gunsalus R.P."/>
        </authorList>
    </citation>
    <scope>NUCLEOTIDE SEQUENCE [LARGE SCALE GENOMIC DNA]</scope>
    <source>
        <strain>SB</strain>
    </source>
</reference>
<reference key="2">
    <citation type="journal article" date="2013" name="J. Bacteriol.">
        <title>Cyclohexanecarboxyl-coenzyme A (CoA) and cyclohex-1-ene-1-carboxyl-CoA dehydrogenases, two enzymes involved in the fermentation of benzoate and crotonate in Syntrophus aciditrophicus.</title>
        <authorList>
            <person name="Kung J.W."/>
            <person name="Seifert J."/>
            <person name="von Bergen M."/>
            <person name="Boll M."/>
        </authorList>
    </citation>
    <scope>FUNCTION</scope>
    <scope>CATALYTIC ACTIVITY</scope>
    <scope>COFACTOR</scope>
    <scope>SUBUNIT</scope>
    <scope>BIOPHYSICOCHEMICAL PROPERTIES</scope>
</reference>
<evidence type="ECO:0000250" key="1">
    <source>
        <dbReference type="UniProtKB" id="Q39QF5"/>
    </source>
</evidence>
<evidence type="ECO:0000269" key="2">
    <source>
    </source>
</evidence>
<evidence type="ECO:0000303" key="3">
    <source>
    </source>
</evidence>
<evidence type="ECO:0000305" key="4"/>
<evidence type="ECO:0000312" key="5">
    <source>
        <dbReference type="EMBL" id="ABC76101.1"/>
    </source>
</evidence>